<gene>
    <name evidence="1" type="primary">rpoY</name>
    <name type="ordered locus">SEQ_0358</name>
</gene>
<accession>C0M9J2</accession>
<reference key="1">
    <citation type="journal article" date="2009" name="PLoS Pathog.">
        <title>Genomic evidence for the evolution of Streptococcus equi: host restriction, increased virulence, and genetic exchange with human pathogens.</title>
        <authorList>
            <person name="Holden M.T.G."/>
            <person name="Heather Z."/>
            <person name="Paillot R."/>
            <person name="Steward K.F."/>
            <person name="Webb K."/>
            <person name="Ainslie F."/>
            <person name="Jourdan T."/>
            <person name="Bason N.C."/>
            <person name="Holroyd N.E."/>
            <person name="Mungall K."/>
            <person name="Quail M.A."/>
            <person name="Sanders M."/>
            <person name="Simmonds M."/>
            <person name="Willey D."/>
            <person name="Brooks K."/>
            <person name="Aanensen D.M."/>
            <person name="Spratt B.G."/>
            <person name="Jolley K.A."/>
            <person name="Maiden M.C.J."/>
            <person name="Kehoe M."/>
            <person name="Chanter N."/>
            <person name="Bentley S.D."/>
            <person name="Robinson C."/>
            <person name="Maskell D.J."/>
            <person name="Parkhill J."/>
            <person name="Waller A.S."/>
        </authorList>
    </citation>
    <scope>NUCLEOTIDE SEQUENCE [LARGE SCALE GENOMIC DNA]</scope>
    <source>
        <strain>4047</strain>
    </source>
</reference>
<proteinExistence type="inferred from homology"/>
<feature type="chain" id="PRO_1000185336" description="DNA-directed RNA polymerase subunit epsilon">
    <location>
        <begin position="1"/>
        <end position="76"/>
    </location>
</feature>
<evidence type="ECO:0000255" key="1">
    <source>
        <dbReference type="HAMAP-Rule" id="MF_01553"/>
    </source>
</evidence>
<keyword id="KW-0240">DNA-directed RNA polymerase</keyword>
<keyword id="KW-0548">Nucleotidyltransferase</keyword>
<keyword id="KW-0804">Transcription</keyword>
<keyword id="KW-0808">Transferase</keyword>
<dbReference type="EC" id="2.7.7.6" evidence="1"/>
<dbReference type="EMBL" id="FM204883">
    <property type="protein sequence ID" value="CAW92485.1"/>
    <property type="molecule type" value="Genomic_DNA"/>
</dbReference>
<dbReference type="RefSeq" id="WP_012514942.1">
    <property type="nucleotide sequence ID" value="NC_012471.1"/>
</dbReference>
<dbReference type="SMR" id="C0M9J2"/>
<dbReference type="KEGG" id="seu:SEQ_0358"/>
<dbReference type="HOGENOM" id="CLU_187518_0_0_9"/>
<dbReference type="OrthoDB" id="2147503at2"/>
<dbReference type="Proteomes" id="UP000001365">
    <property type="component" value="Chromosome"/>
</dbReference>
<dbReference type="GO" id="GO:0000428">
    <property type="term" value="C:DNA-directed RNA polymerase complex"/>
    <property type="evidence" value="ECO:0007669"/>
    <property type="project" value="UniProtKB-KW"/>
</dbReference>
<dbReference type="GO" id="GO:0003677">
    <property type="term" value="F:DNA binding"/>
    <property type="evidence" value="ECO:0007669"/>
    <property type="project" value="UniProtKB-UniRule"/>
</dbReference>
<dbReference type="GO" id="GO:0003899">
    <property type="term" value="F:DNA-directed RNA polymerase activity"/>
    <property type="evidence" value="ECO:0007669"/>
    <property type="project" value="UniProtKB-UniRule"/>
</dbReference>
<dbReference type="GO" id="GO:0006351">
    <property type="term" value="P:DNA-templated transcription"/>
    <property type="evidence" value="ECO:0007669"/>
    <property type="project" value="UniProtKB-UniRule"/>
</dbReference>
<dbReference type="Gene3D" id="3.10.20.730">
    <property type="entry name" value="RNAP, epsilon subunit-like"/>
    <property type="match status" value="1"/>
</dbReference>
<dbReference type="HAMAP" id="MF_01553">
    <property type="entry name" value="RNApol_bact_RpoY"/>
    <property type="match status" value="1"/>
</dbReference>
<dbReference type="InterPro" id="IPR009907">
    <property type="entry name" value="RpoY"/>
</dbReference>
<dbReference type="NCBIfam" id="NF010188">
    <property type="entry name" value="PRK13667.1"/>
    <property type="match status" value="1"/>
</dbReference>
<dbReference type="Pfam" id="PF07288">
    <property type="entry name" value="RpoY"/>
    <property type="match status" value="1"/>
</dbReference>
<comment type="function">
    <text evidence="1">A non-essential component of RNA polymerase (RNAP).</text>
</comment>
<comment type="catalytic activity">
    <reaction evidence="1">
        <text>RNA(n) + a ribonucleoside 5'-triphosphate = RNA(n+1) + diphosphate</text>
        <dbReference type="Rhea" id="RHEA:21248"/>
        <dbReference type="Rhea" id="RHEA-COMP:14527"/>
        <dbReference type="Rhea" id="RHEA-COMP:17342"/>
        <dbReference type="ChEBI" id="CHEBI:33019"/>
        <dbReference type="ChEBI" id="CHEBI:61557"/>
        <dbReference type="ChEBI" id="CHEBI:140395"/>
        <dbReference type="EC" id="2.7.7.6"/>
    </reaction>
</comment>
<comment type="subunit">
    <text evidence="1">RNAP is composed of a core of 2 alpha, a beta and a beta' subunit. The core is associated with a delta subunit, and at least one of epsilon or omega. When a sigma factor is associated with the core the holoenzyme is formed, which can initiate transcription.</text>
</comment>
<comment type="similarity">
    <text evidence="1">Belongs to the RNA polymerase subunit epsilon family.</text>
</comment>
<protein>
    <recommendedName>
        <fullName evidence="1">DNA-directed RNA polymerase subunit epsilon</fullName>
        <shortName evidence="1">RNAP epsilon subunit</shortName>
        <ecNumber evidence="1">2.7.7.6</ecNumber>
    </recommendedName>
    <alternativeName>
        <fullName evidence="1">RNA polymerase epsilon subunit</fullName>
    </alternativeName>
    <alternativeName>
        <fullName evidence="1">Transcriptase subunit epsilon</fullName>
    </alternativeName>
</protein>
<sequence>MIYKVFYQETKERSPRRENTQALYLDIDAASELEGRIKARKMVEEHTDYNVEFIELLSDKHLDYEKETGVFTLTEF</sequence>
<organism>
    <name type="scientific">Streptococcus equi subsp. equi (strain 4047)</name>
    <dbReference type="NCBI Taxonomy" id="553482"/>
    <lineage>
        <taxon>Bacteria</taxon>
        <taxon>Bacillati</taxon>
        <taxon>Bacillota</taxon>
        <taxon>Bacilli</taxon>
        <taxon>Lactobacillales</taxon>
        <taxon>Streptococcaceae</taxon>
        <taxon>Streptococcus</taxon>
    </lineage>
</organism>
<name>RPOY_STRE4</name>